<evidence type="ECO:0000255" key="1">
    <source>
        <dbReference type="HAMAP-Rule" id="MF_00210"/>
    </source>
</evidence>
<name>AROA_STRP1</name>
<comment type="function">
    <text evidence="1">Catalyzes the transfer of the enolpyruvyl moiety of phosphoenolpyruvate (PEP) to the 5-hydroxyl of shikimate-3-phosphate (S3P) to produce enolpyruvyl shikimate-3-phosphate and inorganic phosphate.</text>
</comment>
<comment type="catalytic activity">
    <reaction evidence="1">
        <text>3-phosphoshikimate + phosphoenolpyruvate = 5-O-(1-carboxyvinyl)-3-phosphoshikimate + phosphate</text>
        <dbReference type="Rhea" id="RHEA:21256"/>
        <dbReference type="ChEBI" id="CHEBI:43474"/>
        <dbReference type="ChEBI" id="CHEBI:57701"/>
        <dbReference type="ChEBI" id="CHEBI:58702"/>
        <dbReference type="ChEBI" id="CHEBI:145989"/>
        <dbReference type="EC" id="2.5.1.19"/>
    </reaction>
    <physiologicalReaction direction="left-to-right" evidence="1">
        <dbReference type="Rhea" id="RHEA:21257"/>
    </physiologicalReaction>
</comment>
<comment type="pathway">
    <text evidence="1">Metabolic intermediate biosynthesis; chorismate biosynthesis; chorismate from D-erythrose 4-phosphate and phosphoenolpyruvate: step 6/7.</text>
</comment>
<comment type="subunit">
    <text evidence="1">Monomer.</text>
</comment>
<comment type="subcellular location">
    <subcellularLocation>
        <location evidence="1">Cytoplasm</location>
    </subcellularLocation>
</comment>
<comment type="similarity">
    <text evidence="1">Belongs to the EPSP synthase family.</text>
</comment>
<gene>
    <name evidence="1" type="primary">aroA</name>
    <name type="ordered locus">SPy_1352</name>
    <name type="ordered locus">M5005_Spy1101</name>
</gene>
<feature type="chain" id="PRO_0000088306" description="3-phosphoshikimate 1-carboxyvinyltransferase">
    <location>
        <begin position="1"/>
        <end position="430"/>
    </location>
</feature>
<feature type="active site" description="Proton acceptor" evidence="1">
    <location>
        <position position="315"/>
    </location>
</feature>
<feature type="binding site" evidence="1">
    <location>
        <position position="23"/>
    </location>
    <ligand>
        <name>3-phosphoshikimate</name>
        <dbReference type="ChEBI" id="CHEBI:145989"/>
    </ligand>
</feature>
<feature type="binding site" evidence="1">
    <location>
        <position position="23"/>
    </location>
    <ligand>
        <name>phosphoenolpyruvate</name>
        <dbReference type="ChEBI" id="CHEBI:58702"/>
    </ligand>
</feature>
<feature type="binding site" evidence="1">
    <location>
        <position position="24"/>
    </location>
    <ligand>
        <name>3-phosphoshikimate</name>
        <dbReference type="ChEBI" id="CHEBI:145989"/>
    </ligand>
</feature>
<feature type="binding site" evidence="1">
    <location>
        <position position="28"/>
    </location>
    <ligand>
        <name>3-phosphoshikimate</name>
        <dbReference type="ChEBI" id="CHEBI:145989"/>
    </ligand>
</feature>
<feature type="binding site" evidence="1">
    <location>
        <position position="95"/>
    </location>
    <ligand>
        <name>phosphoenolpyruvate</name>
        <dbReference type="ChEBI" id="CHEBI:58702"/>
    </ligand>
</feature>
<feature type="binding site" evidence="1">
    <location>
        <position position="123"/>
    </location>
    <ligand>
        <name>phosphoenolpyruvate</name>
        <dbReference type="ChEBI" id="CHEBI:58702"/>
    </ligand>
</feature>
<feature type="binding site" evidence="1">
    <location>
        <position position="169"/>
    </location>
    <ligand>
        <name>3-phosphoshikimate</name>
        <dbReference type="ChEBI" id="CHEBI:145989"/>
    </ligand>
</feature>
<feature type="binding site" evidence="1">
    <location>
        <position position="171"/>
    </location>
    <ligand>
        <name>3-phosphoshikimate</name>
        <dbReference type="ChEBI" id="CHEBI:145989"/>
    </ligand>
</feature>
<feature type="binding site" evidence="1">
    <location>
        <position position="171"/>
    </location>
    <ligand>
        <name>phosphoenolpyruvate</name>
        <dbReference type="ChEBI" id="CHEBI:58702"/>
    </ligand>
</feature>
<feature type="binding site" evidence="1">
    <location>
        <position position="315"/>
    </location>
    <ligand>
        <name>3-phosphoshikimate</name>
        <dbReference type="ChEBI" id="CHEBI:145989"/>
    </ligand>
</feature>
<feature type="binding site" evidence="1">
    <location>
        <position position="342"/>
    </location>
    <ligand>
        <name>3-phosphoshikimate</name>
        <dbReference type="ChEBI" id="CHEBI:145989"/>
    </ligand>
</feature>
<feature type="binding site" evidence="1">
    <location>
        <position position="346"/>
    </location>
    <ligand>
        <name>phosphoenolpyruvate</name>
        <dbReference type="ChEBI" id="CHEBI:58702"/>
    </ligand>
</feature>
<feature type="binding site" evidence="1">
    <location>
        <position position="388"/>
    </location>
    <ligand>
        <name>phosphoenolpyruvate</name>
        <dbReference type="ChEBI" id="CHEBI:58702"/>
    </ligand>
</feature>
<reference key="1">
    <citation type="journal article" date="2001" name="Proc. Natl. Acad. Sci. U.S.A.">
        <title>Complete genome sequence of an M1 strain of Streptococcus pyogenes.</title>
        <authorList>
            <person name="Ferretti J.J."/>
            <person name="McShan W.M."/>
            <person name="Ajdic D.J."/>
            <person name="Savic D.J."/>
            <person name="Savic G."/>
            <person name="Lyon K."/>
            <person name="Primeaux C."/>
            <person name="Sezate S."/>
            <person name="Suvorov A.N."/>
            <person name="Kenton S."/>
            <person name="Lai H.S."/>
            <person name="Lin S.P."/>
            <person name="Qian Y."/>
            <person name="Jia H.G."/>
            <person name="Najar F.Z."/>
            <person name="Ren Q."/>
            <person name="Zhu H."/>
            <person name="Song L."/>
            <person name="White J."/>
            <person name="Yuan X."/>
            <person name="Clifton S.W."/>
            <person name="Roe B.A."/>
            <person name="McLaughlin R.E."/>
        </authorList>
    </citation>
    <scope>NUCLEOTIDE SEQUENCE [LARGE SCALE GENOMIC DNA]</scope>
    <source>
        <strain>ATCC 700294 / SF370 / Serotype M1</strain>
    </source>
</reference>
<reference key="2">
    <citation type="journal article" date="2005" name="J. Infect. Dis.">
        <title>Evolutionary origin and emergence of a highly successful clone of serotype M1 group A Streptococcus involved multiple horizontal gene transfer events.</title>
        <authorList>
            <person name="Sumby P."/>
            <person name="Porcella S.F."/>
            <person name="Madrigal A.G."/>
            <person name="Barbian K.D."/>
            <person name="Virtaneva K."/>
            <person name="Ricklefs S.M."/>
            <person name="Sturdevant D.E."/>
            <person name="Graham M.R."/>
            <person name="Vuopio-Varkila J."/>
            <person name="Hoe N.P."/>
            <person name="Musser J.M."/>
        </authorList>
    </citation>
    <scope>NUCLEOTIDE SEQUENCE [LARGE SCALE GENOMIC DNA]</scope>
    <source>
        <strain>ATCC BAA-947 / MGAS5005 / Serotype M1</strain>
    </source>
</reference>
<organism>
    <name type="scientific">Streptococcus pyogenes serotype M1</name>
    <dbReference type="NCBI Taxonomy" id="301447"/>
    <lineage>
        <taxon>Bacteria</taxon>
        <taxon>Bacillati</taxon>
        <taxon>Bacillota</taxon>
        <taxon>Bacilli</taxon>
        <taxon>Lactobacillales</taxon>
        <taxon>Streptococcaceae</taxon>
        <taxon>Streptococcus</taxon>
    </lineage>
</organism>
<keyword id="KW-0028">Amino-acid biosynthesis</keyword>
<keyword id="KW-0057">Aromatic amino acid biosynthesis</keyword>
<keyword id="KW-0963">Cytoplasm</keyword>
<keyword id="KW-1185">Reference proteome</keyword>
<keyword id="KW-0808">Transferase</keyword>
<sequence length="430" mass="46692">MKRMKLRTNAGPLQGTIQVPGDKSISHRAVILGAVAKGETRVKGLLKGEDVLSTIQAFRNLGVRIEEKDDQLVIEGQGFQGLNAPCQTLNMGNSGTSMRLIAGLLAGQPFSVKMIGDESLSKRPMDRIVYPLKQMGVEISGETDRQFPPLQLQGNRNLQPITYTLPISSAQVKSAILLAALQAKGTTQVVEKEITRNHTEEMIQQFGGRLIVDGKRITLVGPQQLTAQEITVPGDISSAAFWLVAGLIIPGSELLLKNVGVNPTRTGILEVVEKMGAQIVYEDMNKKEQVTSIRVVYSNMKGTIISGGLIPRLIDELPIIALLATQAQGTTCIKDAQELRVKETDRIQVVTDILNSMGANIKATADGMIIKGPTVLYGANTSTYGDHRIGMMTAIAALLVKQGQVHLDKEEAIMTSYPTFFKDLERLCHD</sequence>
<proteinExistence type="inferred from homology"/>
<dbReference type="EC" id="2.5.1.19" evidence="1"/>
<dbReference type="EMBL" id="AE004092">
    <property type="protein sequence ID" value="AAK34180.1"/>
    <property type="molecule type" value="Genomic_DNA"/>
</dbReference>
<dbReference type="EMBL" id="CP000017">
    <property type="protein sequence ID" value="AAZ51719.1"/>
    <property type="molecule type" value="Genomic_DNA"/>
</dbReference>
<dbReference type="RefSeq" id="NP_269459.1">
    <property type="nucleotide sequence ID" value="NC_002737.2"/>
</dbReference>
<dbReference type="SMR" id="Q99Z83"/>
<dbReference type="PaxDb" id="1314-HKU360_01134"/>
<dbReference type="KEGG" id="spy:SPy_1352"/>
<dbReference type="KEGG" id="spz:M5005_Spy1101"/>
<dbReference type="PATRIC" id="fig|160490.10.peg.1179"/>
<dbReference type="HOGENOM" id="CLU_024321_0_1_9"/>
<dbReference type="OMA" id="YEDHRMA"/>
<dbReference type="UniPathway" id="UPA00053">
    <property type="reaction ID" value="UER00089"/>
</dbReference>
<dbReference type="Proteomes" id="UP000000750">
    <property type="component" value="Chromosome"/>
</dbReference>
<dbReference type="GO" id="GO:0005737">
    <property type="term" value="C:cytoplasm"/>
    <property type="evidence" value="ECO:0007669"/>
    <property type="project" value="UniProtKB-SubCell"/>
</dbReference>
<dbReference type="GO" id="GO:0003866">
    <property type="term" value="F:3-phosphoshikimate 1-carboxyvinyltransferase activity"/>
    <property type="evidence" value="ECO:0007669"/>
    <property type="project" value="UniProtKB-UniRule"/>
</dbReference>
<dbReference type="GO" id="GO:0008652">
    <property type="term" value="P:amino acid biosynthetic process"/>
    <property type="evidence" value="ECO:0007669"/>
    <property type="project" value="UniProtKB-KW"/>
</dbReference>
<dbReference type="GO" id="GO:0009073">
    <property type="term" value="P:aromatic amino acid family biosynthetic process"/>
    <property type="evidence" value="ECO:0007669"/>
    <property type="project" value="UniProtKB-KW"/>
</dbReference>
<dbReference type="GO" id="GO:0009423">
    <property type="term" value="P:chorismate biosynthetic process"/>
    <property type="evidence" value="ECO:0007669"/>
    <property type="project" value="UniProtKB-UniRule"/>
</dbReference>
<dbReference type="CDD" id="cd01556">
    <property type="entry name" value="EPSP_synthase"/>
    <property type="match status" value="1"/>
</dbReference>
<dbReference type="FunFam" id="3.65.10.10:FF:000005">
    <property type="entry name" value="3-phosphoshikimate 1-carboxyvinyltransferase"/>
    <property type="match status" value="1"/>
</dbReference>
<dbReference type="FunFam" id="3.65.10.10:FF:000006">
    <property type="entry name" value="3-phosphoshikimate 1-carboxyvinyltransferase"/>
    <property type="match status" value="1"/>
</dbReference>
<dbReference type="Gene3D" id="3.65.10.10">
    <property type="entry name" value="Enolpyruvate transferase domain"/>
    <property type="match status" value="2"/>
</dbReference>
<dbReference type="HAMAP" id="MF_00210">
    <property type="entry name" value="EPSP_synth"/>
    <property type="match status" value="1"/>
</dbReference>
<dbReference type="InterPro" id="IPR001986">
    <property type="entry name" value="Enolpyruvate_Tfrase_dom"/>
</dbReference>
<dbReference type="InterPro" id="IPR036968">
    <property type="entry name" value="Enolpyruvate_Tfrase_sf"/>
</dbReference>
<dbReference type="InterPro" id="IPR006264">
    <property type="entry name" value="EPSP_synthase"/>
</dbReference>
<dbReference type="InterPro" id="IPR023193">
    <property type="entry name" value="EPSP_synthase_CS"/>
</dbReference>
<dbReference type="InterPro" id="IPR013792">
    <property type="entry name" value="RNA3'P_cycl/enolpyr_Trfase_a/b"/>
</dbReference>
<dbReference type="NCBIfam" id="TIGR01356">
    <property type="entry name" value="aroA"/>
    <property type="match status" value="1"/>
</dbReference>
<dbReference type="PANTHER" id="PTHR21090">
    <property type="entry name" value="AROM/DEHYDROQUINATE SYNTHASE"/>
    <property type="match status" value="1"/>
</dbReference>
<dbReference type="PANTHER" id="PTHR21090:SF5">
    <property type="entry name" value="PENTAFUNCTIONAL AROM POLYPEPTIDE"/>
    <property type="match status" value="1"/>
</dbReference>
<dbReference type="Pfam" id="PF00275">
    <property type="entry name" value="EPSP_synthase"/>
    <property type="match status" value="1"/>
</dbReference>
<dbReference type="PIRSF" id="PIRSF000505">
    <property type="entry name" value="EPSPS"/>
    <property type="match status" value="1"/>
</dbReference>
<dbReference type="SUPFAM" id="SSF55205">
    <property type="entry name" value="EPT/RTPC-like"/>
    <property type="match status" value="1"/>
</dbReference>
<dbReference type="PROSITE" id="PS00104">
    <property type="entry name" value="EPSP_SYNTHASE_1"/>
    <property type="match status" value="1"/>
</dbReference>
<dbReference type="PROSITE" id="PS00885">
    <property type="entry name" value="EPSP_SYNTHASE_2"/>
    <property type="match status" value="1"/>
</dbReference>
<accession>Q99Z83</accession>
<accession>Q48Y53</accession>
<protein>
    <recommendedName>
        <fullName evidence="1">3-phosphoshikimate 1-carboxyvinyltransferase</fullName>
        <ecNumber evidence="1">2.5.1.19</ecNumber>
    </recommendedName>
    <alternativeName>
        <fullName evidence="1">5-enolpyruvylshikimate-3-phosphate synthase</fullName>
        <shortName evidence="1">EPSP synthase</shortName>
        <shortName evidence="1">EPSPS</shortName>
    </alternativeName>
</protein>